<accession>Q94CE3</accession>
<accession>B9DHL2</accession>
<accession>F4JJ03</accession>
<accession>O81875</accession>
<protein>
    <recommendedName>
        <fullName>Beta carbonic anhydrase 5, chloroplastic</fullName>
        <shortName>AtbCA5</shortName>
        <shortName>AtbetaCA5</shortName>
        <ecNumber>4.2.1.1</ecNumber>
    </recommendedName>
    <alternativeName>
        <fullName>Beta carbonate dehydratase 5</fullName>
    </alternativeName>
</protein>
<gene>
    <name type="primary">BCA5</name>
    <name type="ordered locus">At4g33580</name>
    <name type="ORF">T16L1.70</name>
</gene>
<proteinExistence type="evidence at transcript level"/>
<evidence type="ECO:0000250" key="1"/>
<evidence type="ECO:0000250" key="2">
    <source>
        <dbReference type="UniProtKB" id="P27140"/>
    </source>
</evidence>
<evidence type="ECO:0000250" key="3">
    <source>
        <dbReference type="UniProtKB" id="P42737"/>
    </source>
</evidence>
<evidence type="ECO:0000255" key="4"/>
<evidence type="ECO:0000269" key="5">
    <source>
    </source>
</evidence>
<evidence type="ECO:0000305" key="6"/>
<dbReference type="EC" id="4.2.1.1"/>
<dbReference type="EMBL" id="AL031394">
    <property type="protein sequence ID" value="CAA20571.1"/>
    <property type="status" value="ALT_SEQ"/>
    <property type="molecule type" value="Genomic_DNA"/>
</dbReference>
<dbReference type="EMBL" id="AL161583">
    <property type="protein sequence ID" value="CAB80075.1"/>
    <property type="status" value="ALT_SEQ"/>
    <property type="molecule type" value="Genomic_DNA"/>
</dbReference>
<dbReference type="EMBL" id="CP002687">
    <property type="protein sequence ID" value="AEE86248.1"/>
    <property type="molecule type" value="Genomic_DNA"/>
</dbReference>
<dbReference type="EMBL" id="CP002687">
    <property type="protein sequence ID" value="AEE86249.1"/>
    <property type="molecule type" value="Genomic_DNA"/>
</dbReference>
<dbReference type="EMBL" id="CP002687">
    <property type="protein sequence ID" value="ANM66692.1"/>
    <property type="molecule type" value="Genomic_DNA"/>
</dbReference>
<dbReference type="EMBL" id="AY034930">
    <property type="protein sequence ID" value="AAK59437.1"/>
    <property type="molecule type" value="mRNA"/>
</dbReference>
<dbReference type="EMBL" id="AY122986">
    <property type="protein sequence ID" value="AAM67519.1"/>
    <property type="molecule type" value="mRNA"/>
</dbReference>
<dbReference type="EMBL" id="AK221870">
    <property type="protein sequence ID" value="BAD94173.1"/>
    <property type="molecule type" value="mRNA"/>
</dbReference>
<dbReference type="EMBL" id="AY088420">
    <property type="protein sequence ID" value="AAM65957.1"/>
    <property type="molecule type" value="mRNA"/>
</dbReference>
<dbReference type="EMBL" id="AK317565">
    <property type="protein sequence ID" value="BAH20229.1"/>
    <property type="molecule type" value="mRNA"/>
</dbReference>
<dbReference type="PIR" id="T04975">
    <property type="entry name" value="T04975"/>
</dbReference>
<dbReference type="RefSeq" id="NP_001031784.1">
    <molecule id="Q94CE3-2"/>
    <property type="nucleotide sequence ID" value="NM_001036707.1"/>
</dbReference>
<dbReference type="RefSeq" id="NP_001328574.1">
    <molecule id="Q94CE3-1"/>
    <property type="nucleotide sequence ID" value="NM_001342222.1"/>
</dbReference>
<dbReference type="RefSeq" id="NP_567928.1">
    <molecule id="Q94CE3-1"/>
    <property type="nucleotide sequence ID" value="NM_119514.4"/>
</dbReference>
<dbReference type="SMR" id="Q94CE3"/>
<dbReference type="BioGRID" id="14780">
    <property type="interactions" value="1"/>
</dbReference>
<dbReference type="FunCoup" id="Q94CE3">
    <property type="interactions" value="1668"/>
</dbReference>
<dbReference type="STRING" id="3702.Q94CE3"/>
<dbReference type="iPTMnet" id="Q94CE3"/>
<dbReference type="PaxDb" id="3702-AT4G33580.2"/>
<dbReference type="ProteomicsDB" id="240751">
    <molecule id="Q94CE3-1"/>
</dbReference>
<dbReference type="EnsemblPlants" id="AT4G33580.1">
    <molecule id="Q94CE3-1"/>
    <property type="protein sequence ID" value="AT4G33580.1"/>
    <property type="gene ID" value="AT4G33580"/>
</dbReference>
<dbReference type="EnsemblPlants" id="AT4G33580.2">
    <molecule id="Q94CE3-2"/>
    <property type="protein sequence ID" value="AT4G33580.2"/>
    <property type="gene ID" value="AT4G33580"/>
</dbReference>
<dbReference type="EnsemblPlants" id="AT4G33580.3">
    <molecule id="Q94CE3-1"/>
    <property type="protein sequence ID" value="AT4G33580.3"/>
    <property type="gene ID" value="AT4G33580"/>
</dbReference>
<dbReference type="GeneID" id="829498"/>
<dbReference type="Gramene" id="AT4G33580.1">
    <molecule id="Q94CE3-1"/>
    <property type="protein sequence ID" value="AT4G33580.1"/>
    <property type="gene ID" value="AT4G33580"/>
</dbReference>
<dbReference type="Gramene" id="AT4G33580.2">
    <molecule id="Q94CE3-2"/>
    <property type="protein sequence ID" value="AT4G33580.2"/>
    <property type="gene ID" value="AT4G33580"/>
</dbReference>
<dbReference type="Gramene" id="AT4G33580.3">
    <molecule id="Q94CE3-1"/>
    <property type="protein sequence ID" value="AT4G33580.3"/>
    <property type="gene ID" value="AT4G33580"/>
</dbReference>
<dbReference type="KEGG" id="ath:AT4G33580"/>
<dbReference type="Araport" id="AT4G33580"/>
<dbReference type="TAIR" id="AT4G33580">
    <property type="gene designation" value="BCA5"/>
</dbReference>
<dbReference type="eggNOG" id="KOG1578">
    <property type="taxonomic scope" value="Eukaryota"/>
</dbReference>
<dbReference type="HOGENOM" id="CLU_053879_0_0_1"/>
<dbReference type="InParanoid" id="Q94CE3"/>
<dbReference type="OMA" id="FERTQLR"/>
<dbReference type="PhylomeDB" id="Q94CE3"/>
<dbReference type="PRO" id="PR:Q94CE3"/>
<dbReference type="Proteomes" id="UP000006548">
    <property type="component" value="Chromosome 4"/>
</dbReference>
<dbReference type="ExpressionAtlas" id="Q94CE3">
    <property type="expression patterns" value="baseline and differential"/>
</dbReference>
<dbReference type="GO" id="GO:0009507">
    <property type="term" value="C:chloroplast"/>
    <property type="evidence" value="ECO:0000314"/>
    <property type="project" value="TAIR"/>
</dbReference>
<dbReference type="GO" id="GO:0004089">
    <property type="term" value="F:carbonate dehydratase activity"/>
    <property type="evidence" value="ECO:0007669"/>
    <property type="project" value="UniProtKB-EC"/>
</dbReference>
<dbReference type="GO" id="GO:0008270">
    <property type="term" value="F:zinc ion binding"/>
    <property type="evidence" value="ECO:0007669"/>
    <property type="project" value="InterPro"/>
</dbReference>
<dbReference type="GO" id="GO:0015976">
    <property type="term" value="P:carbon utilization"/>
    <property type="evidence" value="ECO:0007669"/>
    <property type="project" value="InterPro"/>
</dbReference>
<dbReference type="CDD" id="cd00884">
    <property type="entry name" value="beta_CA_cladeB"/>
    <property type="match status" value="1"/>
</dbReference>
<dbReference type="FunFam" id="3.40.1050.10:FF:000003">
    <property type="entry name" value="Carbonic anhydrase"/>
    <property type="match status" value="1"/>
</dbReference>
<dbReference type="Gene3D" id="3.40.1050.10">
    <property type="entry name" value="Carbonic anhydrase"/>
    <property type="match status" value="1"/>
</dbReference>
<dbReference type="InterPro" id="IPR045066">
    <property type="entry name" value="Beta_CA_cladeB"/>
</dbReference>
<dbReference type="InterPro" id="IPR001765">
    <property type="entry name" value="Carbonic_anhydrase"/>
</dbReference>
<dbReference type="InterPro" id="IPR015892">
    <property type="entry name" value="Carbonic_anhydrase_CS"/>
</dbReference>
<dbReference type="InterPro" id="IPR036874">
    <property type="entry name" value="Carbonic_anhydrase_sf"/>
</dbReference>
<dbReference type="PANTHER" id="PTHR11002:SF75">
    <property type="entry name" value="BETA CARBONIC ANHYDRASE 5, CHLOROPLASTIC"/>
    <property type="match status" value="1"/>
</dbReference>
<dbReference type="PANTHER" id="PTHR11002">
    <property type="entry name" value="CARBONIC ANHYDRASE"/>
    <property type="match status" value="1"/>
</dbReference>
<dbReference type="Pfam" id="PF00484">
    <property type="entry name" value="Pro_CA"/>
    <property type="match status" value="1"/>
</dbReference>
<dbReference type="SMART" id="SM00947">
    <property type="entry name" value="Pro_CA"/>
    <property type="match status" value="1"/>
</dbReference>
<dbReference type="SUPFAM" id="SSF53056">
    <property type="entry name" value="beta-carbonic anhydrase, cab"/>
    <property type="match status" value="1"/>
</dbReference>
<dbReference type="PROSITE" id="PS00704">
    <property type="entry name" value="PROK_CO2_ANHYDRASE_1"/>
    <property type="match status" value="1"/>
</dbReference>
<feature type="transit peptide" description="Chloroplast" evidence="4">
    <location>
        <begin position="1"/>
        <end position="56"/>
    </location>
</feature>
<feature type="chain" id="PRO_0000429737" description="Beta carbonic anhydrase 5, chloroplastic">
    <location>
        <begin position="57"/>
        <end position="301"/>
    </location>
</feature>
<feature type="modified residue" description="Phosphothreonine" evidence="3">
    <location>
        <position position="65"/>
    </location>
</feature>
<feature type="modified residue" description="Phosphoserine" evidence="3">
    <location>
        <position position="128"/>
    </location>
</feature>
<feature type="modified residue" description="S-nitrosocysteine" evidence="2">
    <location>
        <position position="231"/>
    </location>
</feature>
<feature type="splice variant" id="VSP_055072" description="In isoform 2." evidence="6">
    <original>M</original>
    <variation>IR</variation>
    <location>
        <position position="98"/>
    </location>
</feature>
<name>BCA5_ARATH</name>
<reference key="1">
    <citation type="journal article" date="1999" name="Nature">
        <title>Sequence and analysis of chromosome 4 of the plant Arabidopsis thaliana.</title>
        <authorList>
            <person name="Mayer K.F.X."/>
            <person name="Schueller C."/>
            <person name="Wambutt R."/>
            <person name="Murphy G."/>
            <person name="Volckaert G."/>
            <person name="Pohl T."/>
            <person name="Duesterhoeft A."/>
            <person name="Stiekema W."/>
            <person name="Entian K.-D."/>
            <person name="Terryn N."/>
            <person name="Harris B."/>
            <person name="Ansorge W."/>
            <person name="Brandt P."/>
            <person name="Grivell L.A."/>
            <person name="Rieger M."/>
            <person name="Weichselgartner M."/>
            <person name="de Simone V."/>
            <person name="Obermaier B."/>
            <person name="Mache R."/>
            <person name="Mueller M."/>
            <person name="Kreis M."/>
            <person name="Delseny M."/>
            <person name="Puigdomenech P."/>
            <person name="Watson M."/>
            <person name="Schmidtheini T."/>
            <person name="Reichert B."/>
            <person name="Portetelle D."/>
            <person name="Perez-Alonso M."/>
            <person name="Boutry M."/>
            <person name="Bancroft I."/>
            <person name="Vos P."/>
            <person name="Hoheisel J."/>
            <person name="Zimmermann W."/>
            <person name="Wedler H."/>
            <person name="Ridley P."/>
            <person name="Langham S.-A."/>
            <person name="McCullagh B."/>
            <person name="Bilham L."/>
            <person name="Robben J."/>
            <person name="van der Schueren J."/>
            <person name="Grymonprez B."/>
            <person name="Chuang Y.-J."/>
            <person name="Vandenbussche F."/>
            <person name="Braeken M."/>
            <person name="Weltjens I."/>
            <person name="Voet M."/>
            <person name="Bastiaens I."/>
            <person name="Aert R."/>
            <person name="Defoor E."/>
            <person name="Weitzenegger T."/>
            <person name="Bothe G."/>
            <person name="Ramsperger U."/>
            <person name="Hilbert H."/>
            <person name="Braun M."/>
            <person name="Holzer E."/>
            <person name="Brandt A."/>
            <person name="Peters S."/>
            <person name="van Staveren M."/>
            <person name="Dirkse W."/>
            <person name="Mooijman P."/>
            <person name="Klein Lankhorst R."/>
            <person name="Rose M."/>
            <person name="Hauf J."/>
            <person name="Koetter P."/>
            <person name="Berneiser S."/>
            <person name="Hempel S."/>
            <person name="Feldpausch M."/>
            <person name="Lamberth S."/>
            <person name="Van den Daele H."/>
            <person name="De Keyser A."/>
            <person name="Buysshaert C."/>
            <person name="Gielen J."/>
            <person name="Villarroel R."/>
            <person name="De Clercq R."/>
            <person name="van Montagu M."/>
            <person name="Rogers J."/>
            <person name="Cronin A."/>
            <person name="Quail M.A."/>
            <person name="Bray-Allen S."/>
            <person name="Clark L."/>
            <person name="Doggett J."/>
            <person name="Hall S."/>
            <person name="Kay M."/>
            <person name="Lennard N."/>
            <person name="McLay K."/>
            <person name="Mayes R."/>
            <person name="Pettett A."/>
            <person name="Rajandream M.A."/>
            <person name="Lyne M."/>
            <person name="Benes V."/>
            <person name="Rechmann S."/>
            <person name="Borkova D."/>
            <person name="Bloecker H."/>
            <person name="Scharfe M."/>
            <person name="Grimm M."/>
            <person name="Loehnert T.-H."/>
            <person name="Dose S."/>
            <person name="de Haan M."/>
            <person name="Maarse A.C."/>
            <person name="Schaefer M."/>
            <person name="Mueller-Auer S."/>
            <person name="Gabel C."/>
            <person name="Fuchs M."/>
            <person name="Fartmann B."/>
            <person name="Granderath K."/>
            <person name="Dauner D."/>
            <person name="Herzl A."/>
            <person name="Neumann S."/>
            <person name="Argiriou A."/>
            <person name="Vitale D."/>
            <person name="Liguori R."/>
            <person name="Piravandi E."/>
            <person name="Massenet O."/>
            <person name="Quigley F."/>
            <person name="Clabauld G."/>
            <person name="Muendlein A."/>
            <person name="Felber R."/>
            <person name="Schnabl S."/>
            <person name="Hiller R."/>
            <person name="Schmidt W."/>
            <person name="Lecharny A."/>
            <person name="Aubourg S."/>
            <person name="Chefdor F."/>
            <person name="Cooke R."/>
            <person name="Berger C."/>
            <person name="Monfort A."/>
            <person name="Casacuberta E."/>
            <person name="Gibbons T."/>
            <person name="Weber N."/>
            <person name="Vandenbol M."/>
            <person name="Bargues M."/>
            <person name="Terol J."/>
            <person name="Torres A."/>
            <person name="Perez-Perez A."/>
            <person name="Purnelle B."/>
            <person name="Bent E."/>
            <person name="Johnson S."/>
            <person name="Tacon D."/>
            <person name="Jesse T."/>
            <person name="Heijnen L."/>
            <person name="Schwarz S."/>
            <person name="Scholler P."/>
            <person name="Heber S."/>
            <person name="Francs P."/>
            <person name="Bielke C."/>
            <person name="Frishman D."/>
            <person name="Haase D."/>
            <person name="Lemcke K."/>
            <person name="Mewes H.-W."/>
            <person name="Stocker S."/>
            <person name="Zaccaria P."/>
            <person name="Bevan M."/>
            <person name="Wilson R.K."/>
            <person name="de la Bastide M."/>
            <person name="Habermann K."/>
            <person name="Parnell L."/>
            <person name="Dedhia N."/>
            <person name="Gnoj L."/>
            <person name="Schutz K."/>
            <person name="Huang E."/>
            <person name="Spiegel L."/>
            <person name="Sekhon M."/>
            <person name="Murray J."/>
            <person name="Sheet P."/>
            <person name="Cordes M."/>
            <person name="Abu-Threideh J."/>
            <person name="Stoneking T."/>
            <person name="Kalicki J."/>
            <person name="Graves T."/>
            <person name="Harmon G."/>
            <person name="Edwards J."/>
            <person name="Latreille P."/>
            <person name="Courtney L."/>
            <person name="Cloud J."/>
            <person name="Abbott A."/>
            <person name="Scott K."/>
            <person name="Johnson D."/>
            <person name="Minx P."/>
            <person name="Bentley D."/>
            <person name="Fulton B."/>
            <person name="Miller N."/>
            <person name="Greco T."/>
            <person name="Kemp K."/>
            <person name="Kramer J."/>
            <person name="Fulton L."/>
            <person name="Mardis E."/>
            <person name="Dante M."/>
            <person name="Pepin K."/>
            <person name="Hillier L.W."/>
            <person name="Nelson J."/>
            <person name="Spieth J."/>
            <person name="Ryan E."/>
            <person name="Andrews S."/>
            <person name="Geisel C."/>
            <person name="Layman D."/>
            <person name="Du H."/>
            <person name="Ali J."/>
            <person name="Berghoff A."/>
            <person name="Jones K."/>
            <person name="Drone K."/>
            <person name="Cotton M."/>
            <person name="Joshu C."/>
            <person name="Antonoiu B."/>
            <person name="Zidanic M."/>
            <person name="Strong C."/>
            <person name="Sun H."/>
            <person name="Lamar B."/>
            <person name="Yordan C."/>
            <person name="Ma P."/>
            <person name="Zhong J."/>
            <person name="Preston R."/>
            <person name="Vil D."/>
            <person name="Shekher M."/>
            <person name="Matero A."/>
            <person name="Shah R."/>
            <person name="Swaby I.K."/>
            <person name="O'Shaughnessy A."/>
            <person name="Rodriguez M."/>
            <person name="Hoffman J."/>
            <person name="Till S."/>
            <person name="Granat S."/>
            <person name="Shohdy N."/>
            <person name="Hasegawa A."/>
            <person name="Hameed A."/>
            <person name="Lodhi M."/>
            <person name="Johnson A."/>
            <person name="Chen E."/>
            <person name="Marra M.A."/>
            <person name="Martienssen R."/>
            <person name="McCombie W.R."/>
        </authorList>
    </citation>
    <scope>NUCLEOTIDE SEQUENCE [LARGE SCALE GENOMIC DNA]</scope>
    <source>
        <strain>cv. Columbia</strain>
    </source>
</reference>
<reference key="2">
    <citation type="journal article" date="2017" name="Plant J.">
        <title>Araport11: a complete reannotation of the Arabidopsis thaliana reference genome.</title>
        <authorList>
            <person name="Cheng C.Y."/>
            <person name="Krishnakumar V."/>
            <person name="Chan A.P."/>
            <person name="Thibaud-Nissen F."/>
            <person name="Schobel S."/>
            <person name="Town C.D."/>
        </authorList>
    </citation>
    <scope>GENOME REANNOTATION</scope>
    <source>
        <strain>cv. Columbia</strain>
    </source>
</reference>
<reference key="3">
    <citation type="journal article" date="2003" name="Science">
        <title>Empirical analysis of transcriptional activity in the Arabidopsis genome.</title>
        <authorList>
            <person name="Yamada K."/>
            <person name="Lim J."/>
            <person name="Dale J.M."/>
            <person name="Chen H."/>
            <person name="Shinn P."/>
            <person name="Palm C.J."/>
            <person name="Southwick A.M."/>
            <person name="Wu H.C."/>
            <person name="Kim C.J."/>
            <person name="Nguyen M."/>
            <person name="Pham P.K."/>
            <person name="Cheuk R.F."/>
            <person name="Karlin-Newmann G."/>
            <person name="Liu S.X."/>
            <person name="Lam B."/>
            <person name="Sakano H."/>
            <person name="Wu T."/>
            <person name="Yu G."/>
            <person name="Miranda M."/>
            <person name="Quach H.L."/>
            <person name="Tripp M."/>
            <person name="Chang C.H."/>
            <person name="Lee J.M."/>
            <person name="Toriumi M.J."/>
            <person name="Chan M.M."/>
            <person name="Tang C.C."/>
            <person name="Onodera C.S."/>
            <person name="Deng J.M."/>
            <person name="Akiyama K."/>
            <person name="Ansari Y."/>
            <person name="Arakawa T."/>
            <person name="Banh J."/>
            <person name="Banno F."/>
            <person name="Bowser L."/>
            <person name="Brooks S.Y."/>
            <person name="Carninci P."/>
            <person name="Chao Q."/>
            <person name="Choy N."/>
            <person name="Enju A."/>
            <person name="Goldsmith A.D."/>
            <person name="Gurjal M."/>
            <person name="Hansen N.F."/>
            <person name="Hayashizaki Y."/>
            <person name="Johnson-Hopson C."/>
            <person name="Hsuan V.W."/>
            <person name="Iida K."/>
            <person name="Karnes M."/>
            <person name="Khan S."/>
            <person name="Koesema E."/>
            <person name="Ishida J."/>
            <person name="Jiang P.X."/>
            <person name="Jones T."/>
            <person name="Kawai J."/>
            <person name="Kamiya A."/>
            <person name="Meyers C."/>
            <person name="Nakajima M."/>
            <person name="Narusaka M."/>
            <person name="Seki M."/>
            <person name="Sakurai T."/>
            <person name="Satou M."/>
            <person name="Tamse R."/>
            <person name="Vaysberg M."/>
            <person name="Wallender E.K."/>
            <person name="Wong C."/>
            <person name="Yamamura Y."/>
            <person name="Yuan S."/>
            <person name="Shinozaki K."/>
            <person name="Davis R.W."/>
            <person name="Theologis A."/>
            <person name="Ecker J.R."/>
        </authorList>
    </citation>
    <scope>NUCLEOTIDE SEQUENCE [LARGE SCALE MRNA]</scope>
    <source>
        <strain>cv. Columbia</strain>
    </source>
</reference>
<reference key="4">
    <citation type="submission" date="2005-03" db="EMBL/GenBank/DDBJ databases">
        <title>Large-scale analysis of RIKEN Arabidopsis full-length (RAFL) cDNAs.</title>
        <authorList>
            <person name="Totoki Y."/>
            <person name="Seki M."/>
            <person name="Ishida J."/>
            <person name="Nakajima M."/>
            <person name="Enju A."/>
            <person name="Kamiya A."/>
            <person name="Narusaka M."/>
            <person name="Shin-i T."/>
            <person name="Nakagawa M."/>
            <person name="Sakamoto N."/>
            <person name="Oishi K."/>
            <person name="Kohara Y."/>
            <person name="Kobayashi M."/>
            <person name="Toyoda A."/>
            <person name="Sakaki Y."/>
            <person name="Sakurai T."/>
            <person name="Iida K."/>
            <person name="Akiyama K."/>
            <person name="Satou M."/>
            <person name="Toyoda T."/>
            <person name="Konagaya A."/>
            <person name="Carninci P."/>
            <person name="Kawai J."/>
            <person name="Hayashizaki Y."/>
            <person name="Shinozaki K."/>
        </authorList>
    </citation>
    <scope>NUCLEOTIDE SEQUENCE [LARGE SCALE MRNA]</scope>
    <source>
        <strain>cv. Columbia</strain>
    </source>
</reference>
<reference key="5">
    <citation type="submission" date="2002-03" db="EMBL/GenBank/DDBJ databases">
        <title>Full-length cDNA from Arabidopsis thaliana.</title>
        <authorList>
            <person name="Brover V.V."/>
            <person name="Troukhan M.E."/>
            <person name="Alexandrov N.A."/>
            <person name="Lu Y.-P."/>
            <person name="Flavell R.B."/>
            <person name="Feldmann K.A."/>
        </authorList>
    </citation>
    <scope>NUCLEOTIDE SEQUENCE [LARGE SCALE MRNA]</scope>
</reference>
<reference key="6">
    <citation type="journal article" date="2009" name="DNA Res.">
        <title>Analysis of multiple occurrences of alternative splicing events in Arabidopsis thaliana using novel sequenced full-length cDNAs.</title>
        <authorList>
            <person name="Iida K."/>
            <person name="Fukami-Kobayashi K."/>
            <person name="Toyoda A."/>
            <person name="Sakaki Y."/>
            <person name="Kobayashi M."/>
            <person name="Seki M."/>
            <person name="Shinozaki K."/>
        </authorList>
    </citation>
    <scope>NUCLEOTIDE SEQUENCE [LARGE SCALE MRNA] OF 103-301</scope>
    <source>
        <strain>cv. Columbia</strain>
        <tissue>Flower</tissue>
        <tissue>Silique</tissue>
    </source>
</reference>
<reference key="7">
    <citation type="journal article" date="2007" name="Plant Cell Environ.">
        <title>Characterization and expression analysis of genes encoding alpha and beta carbonic anhydrases in Arabidopsis.</title>
        <authorList>
            <person name="Fabre N."/>
            <person name="Reiter I.M."/>
            <person name="Becuwe-Linka N."/>
            <person name="Genty B."/>
            <person name="Rumeau D."/>
        </authorList>
    </citation>
    <scope>TISSUE SPECIFICITY</scope>
    <scope>SUBCELLULAR LOCATION</scope>
    <scope>GENE FAMILY</scope>
    <scope>NOMENCLATURE</scope>
    <source>
        <strain>cv. Columbia</strain>
    </source>
</reference>
<comment type="function">
    <text evidence="1">Reversible hydration of carbon dioxide.</text>
</comment>
<comment type="catalytic activity">
    <reaction>
        <text>hydrogencarbonate + H(+) = CO2 + H2O</text>
        <dbReference type="Rhea" id="RHEA:10748"/>
        <dbReference type="ChEBI" id="CHEBI:15377"/>
        <dbReference type="ChEBI" id="CHEBI:15378"/>
        <dbReference type="ChEBI" id="CHEBI:16526"/>
        <dbReference type="ChEBI" id="CHEBI:17544"/>
        <dbReference type="EC" id="4.2.1.1"/>
    </reaction>
</comment>
<comment type="subcellular location">
    <subcellularLocation>
        <location evidence="5">Plastid</location>
        <location evidence="5">Chloroplast</location>
    </subcellularLocation>
</comment>
<comment type="alternative products">
    <event type="alternative splicing"/>
    <isoform>
        <id>Q94CE3-1</id>
        <name>1</name>
        <sequence type="displayed"/>
    </isoform>
    <isoform>
        <id>Q94CE3-2</id>
        <name>2</name>
        <sequence type="described" ref="VSP_055072"/>
    </isoform>
</comment>
<comment type="tissue specificity">
    <text evidence="5">Strongly expressed in aerial tissues including leaves, stems, flowers and siliques.</text>
</comment>
<comment type="similarity">
    <text evidence="6">Belongs to the beta-class carbonic anhydrase family.</text>
</comment>
<comment type="sequence caution" evidence="6">
    <conflict type="erroneous gene model prediction">
        <sequence resource="EMBL-CDS" id="CAA20571"/>
    </conflict>
</comment>
<comment type="sequence caution" evidence="6">
    <conflict type="erroneous gene model prediction">
        <sequence resource="EMBL-CDS" id="CAB80075"/>
    </conflict>
</comment>
<organism>
    <name type="scientific">Arabidopsis thaliana</name>
    <name type="common">Mouse-ear cress</name>
    <dbReference type="NCBI Taxonomy" id="3702"/>
    <lineage>
        <taxon>Eukaryota</taxon>
        <taxon>Viridiplantae</taxon>
        <taxon>Streptophyta</taxon>
        <taxon>Embryophyta</taxon>
        <taxon>Tracheophyta</taxon>
        <taxon>Spermatophyta</taxon>
        <taxon>Magnoliopsida</taxon>
        <taxon>eudicotyledons</taxon>
        <taxon>Gunneridae</taxon>
        <taxon>Pentapetalae</taxon>
        <taxon>rosids</taxon>
        <taxon>malvids</taxon>
        <taxon>Brassicales</taxon>
        <taxon>Brassicaceae</taxon>
        <taxon>Camelineae</taxon>
        <taxon>Arabidopsis</taxon>
    </lineage>
</organism>
<keyword id="KW-0025">Alternative splicing</keyword>
<keyword id="KW-0150">Chloroplast</keyword>
<keyword id="KW-0456">Lyase</keyword>
<keyword id="KW-0597">Phosphoprotein</keyword>
<keyword id="KW-0934">Plastid</keyword>
<keyword id="KW-1185">Reference proteome</keyword>
<keyword id="KW-0702">S-nitrosylation</keyword>
<keyword id="KW-0809">Transit peptide</keyword>
<keyword id="KW-0862">Zinc</keyword>
<sequence length="301" mass="33401">MAATPTHFSVSHDPFSSTSLLNLQTQAIFGPNHSLKTTQLRIPASFRRKATNLQVMASGKTPGLTQEANGVAIDRQNNTDVFDDMKQRFLAFKKLKYMDDFEHYKNLADAQAPKFLVIACADSRVCPSAVLGFQPGDAFTVRNIANLVPPYESGPTETKAALEFSVNTLNVENILVIGHSRCGGIQALMKMEDEGDSRSFIHNWVVVGKKAKESTKAVASNLHFDHQCQHCEKASINHSLERLLGYPWIEEKVRQGSLSLHGGYYNFVDCTFEKWTVDYAASRGKKKEGSGIAVKDRSVWS</sequence>